<comment type="function">
    <text evidence="1">Allows the formation of correctly charged Gln-tRNA(Gln) through the transamidation of misacylated Glu-tRNA(Gln) in organisms which lack glutaminyl-tRNA synthetase. The reaction takes place in the presence of glutamine and ATP through an activated gamma-phospho-Glu-tRNA(Gln).</text>
</comment>
<comment type="catalytic activity">
    <reaction evidence="1">
        <text>L-glutamyl-tRNA(Gln) + L-glutamine + ATP + H2O = L-glutaminyl-tRNA(Gln) + L-glutamate + ADP + phosphate + H(+)</text>
        <dbReference type="Rhea" id="RHEA:17521"/>
        <dbReference type="Rhea" id="RHEA-COMP:9681"/>
        <dbReference type="Rhea" id="RHEA-COMP:9684"/>
        <dbReference type="ChEBI" id="CHEBI:15377"/>
        <dbReference type="ChEBI" id="CHEBI:15378"/>
        <dbReference type="ChEBI" id="CHEBI:29985"/>
        <dbReference type="ChEBI" id="CHEBI:30616"/>
        <dbReference type="ChEBI" id="CHEBI:43474"/>
        <dbReference type="ChEBI" id="CHEBI:58359"/>
        <dbReference type="ChEBI" id="CHEBI:78520"/>
        <dbReference type="ChEBI" id="CHEBI:78521"/>
        <dbReference type="ChEBI" id="CHEBI:456216"/>
        <dbReference type="EC" id="6.3.5.7"/>
    </reaction>
</comment>
<comment type="subunit">
    <text evidence="1">Heterotrimer of A, B and C subunits.</text>
</comment>
<comment type="similarity">
    <text evidence="1">Belongs to the amidase family. GatA subfamily.</text>
</comment>
<proteinExistence type="inferred from homology"/>
<keyword id="KW-0067">ATP-binding</keyword>
<keyword id="KW-0436">Ligase</keyword>
<keyword id="KW-0547">Nucleotide-binding</keyword>
<keyword id="KW-0648">Protein biosynthesis</keyword>
<gene>
    <name evidence="1" type="primary">gatA</name>
    <name type="ordered locus">Minf_1693</name>
</gene>
<accession>B3DWT4</accession>
<organism>
    <name type="scientific">Methylacidiphilum infernorum (isolate V4)</name>
    <name type="common">Methylokorus infernorum (strain V4)</name>
    <dbReference type="NCBI Taxonomy" id="481448"/>
    <lineage>
        <taxon>Bacteria</taxon>
        <taxon>Pseudomonadati</taxon>
        <taxon>Verrucomicrobiota</taxon>
        <taxon>Methylacidiphilae</taxon>
        <taxon>Methylacidiphilales</taxon>
        <taxon>Methylacidiphilaceae</taxon>
        <taxon>Methylacidiphilum (ex Ratnadevi et al. 2023)</taxon>
    </lineage>
</organism>
<evidence type="ECO:0000255" key="1">
    <source>
        <dbReference type="HAMAP-Rule" id="MF_00120"/>
    </source>
</evidence>
<name>GATA_METI4</name>
<feature type="chain" id="PRO_1000095148" description="Glutamyl-tRNA(Gln) amidotransferase subunit A">
    <location>
        <begin position="1"/>
        <end position="494"/>
    </location>
</feature>
<feature type="active site" description="Charge relay system" evidence="1">
    <location>
        <position position="72"/>
    </location>
</feature>
<feature type="active site" description="Charge relay system" evidence="1">
    <location>
        <position position="147"/>
    </location>
</feature>
<feature type="active site" description="Acyl-ester intermediate" evidence="1">
    <location>
        <position position="171"/>
    </location>
</feature>
<dbReference type="EC" id="6.3.5.7" evidence="1"/>
<dbReference type="EMBL" id="CP000975">
    <property type="protein sequence ID" value="ACD83747.1"/>
    <property type="molecule type" value="Genomic_DNA"/>
</dbReference>
<dbReference type="RefSeq" id="WP_012464029.1">
    <property type="nucleotide sequence ID" value="NC_010794.1"/>
</dbReference>
<dbReference type="SMR" id="B3DWT4"/>
<dbReference type="STRING" id="481448.Minf_1693"/>
<dbReference type="KEGG" id="min:Minf_1693"/>
<dbReference type="eggNOG" id="COG0154">
    <property type="taxonomic scope" value="Bacteria"/>
</dbReference>
<dbReference type="HOGENOM" id="CLU_009600_0_3_0"/>
<dbReference type="OrthoDB" id="9811471at2"/>
<dbReference type="Proteomes" id="UP000009149">
    <property type="component" value="Chromosome"/>
</dbReference>
<dbReference type="GO" id="GO:0030956">
    <property type="term" value="C:glutamyl-tRNA(Gln) amidotransferase complex"/>
    <property type="evidence" value="ECO:0007669"/>
    <property type="project" value="InterPro"/>
</dbReference>
<dbReference type="GO" id="GO:0005524">
    <property type="term" value="F:ATP binding"/>
    <property type="evidence" value="ECO:0007669"/>
    <property type="project" value="UniProtKB-KW"/>
</dbReference>
<dbReference type="GO" id="GO:0050567">
    <property type="term" value="F:glutaminyl-tRNA synthase (glutamine-hydrolyzing) activity"/>
    <property type="evidence" value="ECO:0007669"/>
    <property type="project" value="UniProtKB-UniRule"/>
</dbReference>
<dbReference type="GO" id="GO:0006412">
    <property type="term" value="P:translation"/>
    <property type="evidence" value="ECO:0007669"/>
    <property type="project" value="UniProtKB-UniRule"/>
</dbReference>
<dbReference type="Gene3D" id="3.90.1300.10">
    <property type="entry name" value="Amidase signature (AS) domain"/>
    <property type="match status" value="1"/>
</dbReference>
<dbReference type="HAMAP" id="MF_00120">
    <property type="entry name" value="GatA"/>
    <property type="match status" value="1"/>
</dbReference>
<dbReference type="InterPro" id="IPR000120">
    <property type="entry name" value="Amidase"/>
</dbReference>
<dbReference type="InterPro" id="IPR020556">
    <property type="entry name" value="Amidase_CS"/>
</dbReference>
<dbReference type="InterPro" id="IPR023631">
    <property type="entry name" value="Amidase_dom"/>
</dbReference>
<dbReference type="InterPro" id="IPR036928">
    <property type="entry name" value="AS_sf"/>
</dbReference>
<dbReference type="InterPro" id="IPR004412">
    <property type="entry name" value="GatA"/>
</dbReference>
<dbReference type="NCBIfam" id="TIGR00132">
    <property type="entry name" value="gatA"/>
    <property type="match status" value="1"/>
</dbReference>
<dbReference type="PANTHER" id="PTHR11895:SF151">
    <property type="entry name" value="GLUTAMYL-TRNA(GLN) AMIDOTRANSFERASE SUBUNIT A"/>
    <property type="match status" value="1"/>
</dbReference>
<dbReference type="PANTHER" id="PTHR11895">
    <property type="entry name" value="TRANSAMIDASE"/>
    <property type="match status" value="1"/>
</dbReference>
<dbReference type="Pfam" id="PF01425">
    <property type="entry name" value="Amidase"/>
    <property type="match status" value="1"/>
</dbReference>
<dbReference type="SUPFAM" id="SSF75304">
    <property type="entry name" value="Amidase signature (AS) enzymes"/>
    <property type="match status" value="1"/>
</dbReference>
<dbReference type="PROSITE" id="PS00571">
    <property type="entry name" value="AMIDASES"/>
    <property type="match status" value="1"/>
</dbReference>
<reference key="1">
    <citation type="journal article" date="2008" name="Biol. Direct">
        <title>Complete genome sequence of the extremely acidophilic methanotroph isolate V4, Methylacidiphilum infernorum, a representative of the bacterial phylum Verrucomicrobia.</title>
        <authorList>
            <person name="Hou S."/>
            <person name="Makarova K.S."/>
            <person name="Saw J.H."/>
            <person name="Senin P."/>
            <person name="Ly B.V."/>
            <person name="Zhou Z."/>
            <person name="Ren Y."/>
            <person name="Wang J."/>
            <person name="Galperin M.Y."/>
            <person name="Omelchenko M.V."/>
            <person name="Wolf Y.I."/>
            <person name="Yutin N."/>
            <person name="Koonin E.V."/>
            <person name="Stott M.B."/>
            <person name="Mountain B.W."/>
            <person name="Crowe M.A."/>
            <person name="Smirnova A.V."/>
            <person name="Dunfield P.F."/>
            <person name="Feng L."/>
            <person name="Wang L."/>
            <person name="Alam M."/>
        </authorList>
    </citation>
    <scope>NUCLEOTIDE SEQUENCE [LARGE SCALE GENOMIC DNA]</scope>
    <source>
        <strain>Isolate V4</strain>
    </source>
</reference>
<sequence>MKLFELSVKELRRLLVQKEVSPLEVVENLLCRIAEVDPKIFAYIYLNHERALEASKKADISLPLGGVPVAIKDNINVLGEPCRCASRILEGYLAPYDSTVIEKLKKAGAILLGRTNMDEFAMGSSTENSSVGITRNPWNTERVPGGSSGGSAAAVAAHEAFCALGSDTGGSIRQPAAFCGCVGLKPTYGRVSRYGLTAFASSLDQIGPITKTVEDAALLLEVISGFDPFDNTSEKLPVPRFSELLENRPLKDFVLGIPKEYFIEGIDGEVRQALSQVIGHYEKLGVKIEEVSLPHTPYAVATYYILATAEASANLARFDGIRYGKRAKNYNDLIDYYGKTRDEGFGSEVKRRILLGTYVLSSGYYDAYYLRALKVKEKIKQDFSLAFQKCQALLTPTSPFCAFRIGEKTSDPLQMYLADIFTIAVNLAGICALSIPCGRSTEGLPIGFQLIGPAWKEETILALGYIYQKTTGWVPPLPPLGGPTGGGGADGLPL</sequence>
<protein>
    <recommendedName>
        <fullName evidence="1">Glutamyl-tRNA(Gln) amidotransferase subunit A</fullName>
        <shortName evidence="1">Glu-ADT subunit A</shortName>
        <ecNumber evidence="1">6.3.5.7</ecNumber>
    </recommendedName>
</protein>